<evidence type="ECO:0000255" key="1">
    <source>
        <dbReference type="HAMAP-Rule" id="MF_04023"/>
    </source>
</evidence>
<evidence type="ECO:0000256" key="2">
    <source>
        <dbReference type="SAM" id="MobiDB-lite"/>
    </source>
</evidence>
<evidence type="ECO:0000269" key="3">
    <source>
    </source>
</evidence>
<evidence type="ECO:0000269" key="4">
    <source>
    </source>
</evidence>
<evidence type="ECO:0000269" key="5">
    <source>
    </source>
</evidence>
<evidence type="ECO:0000269" key="6">
    <source>
    </source>
</evidence>
<evidence type="ECO:0007744" key="7">
    <source>
        <dbReference type="PDB" id="6T3X"/>
    </source>
</evidence>
<evidence type="ECO:0007829" key="8">
    <source>
        <dbReference type="PDB" id="5DOB"/>
    </source>
</evidence>
<evidence type="ECO:0007829" key="9">
    <source>
        <dbReference type="PDB" id="5DOC"/>
    </source>
</evidence>
<evidence type="ECO:0007829" key="10">
    <source>
        <dbReference type="PDB" id="6T3X"/>
    </source>
</evidence>
<organismHost>
    <name type="scientific">Homo sapiens</name>
    <name type="common">Human</name>
    <dbReference type="NCBI Taxonomy" id="9606"/>
</organismHost>
<sequence length="376" mass="42313">MSSVSGVRTPRERRSALRSLLRKRRQRELASKVASTVNGATSANNHGEPPSPADARPRLTLHDLHDIFREHPELELKYLNMMKMAITGKESICLPFNFHSHRQHTCLDISPYGNEQVSRIACTSCEDNRILPTASDAMVAFINQTSNIMKNRNFYYGFCKSSELLKLSTNQPPIFQIYYLLHAANHDIVPFMHAEDGRLHMHVIFENPDVHIPCDCITQMLTAAREDYSVTLNIVRDHVVISVLCHAVSASSVKIDVTILQRKIDEMDIPNDVSESFERYKELIQELCQSSGNNLYEEATSSYAIRSPLTASPLHVVSTNGCGPSSSSQSTPPHLHPPSQATQPHHYSHHQSQSQQHHHRPQSPPPPLFLNSIRAP</sequence>
<feature type="chain" id="PRO_0000116013" description="Nuclear egress protein 1">
    <location>
        <begin position="1"/>
        <end position="376"/>
    </location>
</feature>
<feature type="zinc finger region" description="CCCH-type" evidence="1">
    <location>
        <begin position="106"/>
        <end position="211"/>
    </location>
</feature>
<feature type="region of interest" description="Disordered" evidence="2">
    <location>
        <begin position="22"/>
        <end position="57"/>
    </location>
</feature>
<feature type="region of interest" description="Disordered" evidence="2">
    <location>
        <begin position="316"/>
        <end position="376"/>
    </location>
</feature>
<feature type="compositionally biased region" description="Polar residues" evidence="2">
    <location>
        <begin position="33"/>
        <end position="45"/>
    </location>
</feature>
<feature type="compositionally biased region" description="Polar residues" evidence="2">
    <location>
        <begin position="317"/>
        <end position="332"/>
    </location>
</feature>
<feature type="modified residue" description="Phosphoserine" evidence="4">
    <location>
        <position position="19"/>
    </location>
</feature>
<feature type="mutagenesis site" description="No effect on replication kinetics." evidence="4">
    <original>S</original>
    <variation>A</variation>
    <location>
        <position position="19"/>
    </location>
</feature>
<feature type="mutagenesis site" description="Loss of interaction and co-localization with NEC1." evidence="4">
    <original>L</original>
    <variation>A</variation>
    <location>
        <position position="79"/>
    </location>
</feature>
<feature type="mutagenesis site" description="Partial relocalization in the host nucleoplasm." evidence="6">
    <original>C</original>
    <variation>S</variation>
    <location>
        <position position="122"/>
    </location>
</feature>
<feature type="mutagenesis site" description="Partial relocalization in the host nucleoplasm." evidence="6">
    <original>C</original>
    <variation>S</variation>
    <location>
        <position position="125"/>
    </location>
</feature>
<feature type="mutagenesis site" description="Partial relocalization in the host nucleoplasm." evidence="6">
    <original>H</original>
    <variation>A</variation>
    <location>
        <position position="211"/>
    </location>
</feature>
<feature type="helix" evidence="10">
    <location>
        <begin position="61"/>
        <end position="70"/>
    </location>
</feature>
<feature type="helix" evidence="10">
    <location>
        <begin position="72"/>
        <end position="81"/>
    </location>
</feature>
<feature type="strand" evidence="8">
    <location>
        <begin position="89"/>
        <end position="91"/>
    </location>
</feature>
<feature type="strand" evidence="9">
    <location>
        <begin position="94"/>
        <end position="97"/>
    </location>
</feature>
<feature type="helix" evidence="9">
    <location>
        <begin position="98"/>
        <end position="100"/>
    </location>
</feature>
<feature type="strand" evidence="9">
    <location>
        <begin position="105"/>
        <end position="110"/>
    </location>
</feature>
<feature type="strand" evidence="9">
    <location>
        <begin position="113"/>
        <end position="118"/>
    </location>
</feature>
<feature type="turn" evidence="9">
    <location>
        <begin position="119"/>
        <end position="121"/>
    </location>
</feature>
<feature type="helix" evidence="9">
    <location>
        <begin position="134"/>
        <end position="142"/>
    </location>
</feature>
<feature type="helix" evidence="9">
    <location>
        <begin position="144"/>
        <end position="146"/>
    </location>
</feature>
<feature type="turn" evidence="9">
    <location>
        <begin position="148"/>
        <end position="151"/>
    </location>
</feature>
<feature type="helix" evidence="9">
    <location>
        <begin position="152"/>
        <end position="156"/>
    </location>
</feature>
<feature type="turn" evidence="9">
    <location>
        <begin position="157"/>
        <end position="160"/>
    </location>
</feature>
<feature type="helix" evidence="9">
    <location>
        <begin position="162"/>
        <end position="168"/>
    </location>
</feature>
<feature type="helix" evidence="9">
    <location>
        <begin position="172"/>
        <end position="184"/>
    </location>
</feature>
<feature type="strand" evidence="9">
    <location>
        <begin position="186"/>
        <end position="195"/>
    </location>
</feature>
<feature type="strand" evidence="9">
    <location>
        <begin position="198"/>
        <end position="208"/>
    </location>
</feature>
<feature type="strand" evidence="9">
    <location>
        <begin position="210"/>
        <end position="212"/>
    </location>
</feature>
<feature type="helix" evidence="9">
    <location>
        <begin position="214"/>
        <end position="224"/>
    </location>
</feature>
<feature type="turn" evidence="9">
    <location>
        <begin position="225"/>
        <end position="227"/>
    </location>
</feature>
<feature type="strand" evidence="9">
    <location>
        <begin position="228"/>
        <end position="235"/>
    </location>
</feature>
<feature type="strand" evidence="9">
    <location>
        <begin position="238"/>
        <end position="246"/>
    </location>
</feature>
<feature type="helix" evidence="9">
    <location>
        <begin position="257"/>
        <end position="266"/>
    </location>
</feature>
<feature type="helix" evidence="9">
    <location>
        <begin position="271"/>
        <end position="279"/>
    </location>
</feature>
<feature type="helix" evidence="9">
    <location>
        <begin position="281"/>
        <end position="288"/>
    </location>
</feature>
<proteinExistence type="evidence at protein level"/>
<dbReference type="EMBL" id="M17209">
    <property type="protein sequence ID" value="AAA46007.1"/>
    <property type="molecule type" value="Genomic_DNA"/>
</dbReference>
<dbReference type="EMBL" id="X17403">
    <property type="protein sequence ID" value="CAA35412.1"/>
    <property type="molecule type" value="Genomic_DNA"/>
</dbReference>
<dbReference type="EMBL" id="BK000394">
    <property type="protein sequence ID" value="DAA00158.1"/>
    <property type="molecule type" value="Genomic_DNA"/>
</dbReference>
<dbReference type="PIR" id="S09816">
    <property type="entry name" value="QQBEW2"/>
</dbReference>
<dbReference type="PDB" id="5DOB">
    <property type="method" value="X-ray"/>
    <property type="resolution" value="2.47 A"/>
    <property type="chains" value="A=61-289"/>
</dbReference>
<dbReference type="PDB" id="5DOC">
    <property type="method" value="X-ray"/>
    <property type="resolution" value="1.94 A"/>
    <property type="chains" value="A/B=88-290"/>
</dbReference>
<dbReference type="PDB" id="5DOE">
    <property type="method" value="X-ray"/>
    <property type="resolution" value="3.00 A"/>
    <property type="chains" value="B=72-290"/>
</dbReference>
<dbReference type="PDB" id="6T3X">
    <property type="method" value="X-ray"/>
    <property type="resolution" value="1.48 A"/>
    <property type="chains" value="A/C=59-87"/>
</dbReference>
<dbReference type="PDBsum" id="5DOB"/>
<dbReference type="PDBsum" id="5DOC"/>
<dbReference type="PDBsum" id="5DOE"/>
<dbReference type="PDBsum" id="6T3X"/>
<dbReference type="SMR" id="P16794"/>
<dbReference type="iPTMnet" id="P16794"/>
<dbReference type="EvolutionaryTrace" id="P16794"/>
<dbReference type="Proteomes" id="UP000008991">
    <property type="component" value="Segment"/>
</dbReference>
<dbReference type="Proteomes" id="UP000008992">
    <property type="component" value="Segment"/>
</dbReference>
<dbReference type="GO" id="GO:0044201">
    <property type="term" value="C:host cell nuclear inner membrane"/>
    <property type="evidence" value="ECO:0007669"/>
    <property type="project" value="UniProtKB-SubCell"/>
</dbReference>
<dbReference type="GO" id="GO:0016020">
    <property type="term" value="C:membrane"/>
    <property type="evidence" value="ECO:0007669"/>
    <property type="project" value="UniProtKB-KW"/>
</dbReference>
<dbReference type="GO" id="GO:0008270">
    <property type="term" value="F:zinc ion binding"/>
    <property type="evidence" value="ECO:0007669"/>
    <property type="project" value="UniProtKB-KW"/>
</dbReference>
<dbReference type="GO" id="GO:0046765">
    <property type="term" value="P:viral budding from nuclear membrane"/>
    <property type="evidence" value="ECO:0007669"/>
    <property type="project" value="InterPro"/>
</dbReference>
<dbReference type="HAMAP" id="MF_04023">
    <property type="entry name" value="HSV_NEC1"/>
    <property type="match status" value="1"/>
</dbReference>
<dbReference type="InterPro" id="IPR021152">
    <property type="entry name" value="Herpes_UL31"/>
</dbReference>
<dbReference type="Pfam" id="PF02718">
    <property type="entry name" value="Herpes_UL31"/>
    <property type="match status" value="1"/>
</dbReference>
<accession>P16794</accession>
<accession>Q7M6N0</accession>
<comment type="function">
    <text evidence="1 4">Plays an essential role in virion nuclear egress, the first step of virion release from infected cell. Within the host nucleus, NEC1 interacts with the newly formed capsid through the vertexes and directs it to the inner nuclear membrane by associating with NEC2. Induces the budding of the capsid at the inner nuclear membrane as well as its envelopment into the perinuclear space. There, the NEC1/NEC2 complex promotes the fusion of the enveloped capsid with the outer nuclear membrane and the subsequent release of the viral capsid into the cytoplasm where it will reach the secondary budding sites in the host Golgi or trans-Golgi network.</text>
</comment>
<comment type="subunit">
    <text evidence="1 5 6">Forms a heterohexameric complex with NEC2. Interacts with capsid vertex specific component 2/CVC2; this interaction directs the capsid to the host inner nuclear membrane to initiate budding.</text>
</comment>
<comment type="subcellular location">
    <subcellularLocation>
        <location evidence="1 3 4 5 6">Host nucleus inner membrane</location>
    </subcellularLocation>
    <text evidence="1 5">Remains attached to the nucleus inner membrane through interaction with NEC2.</text>
</comment>
<comment type="PTM">
    <text evidence="1 4">Phosphorylated at serine residues in the N-terminus. This phosphorylation regulates the localization within the inner nuclear membrane (By similarity). Phosphorylation by viral kinase UL97 at Ser-19 plays an important role for correct viral nuclear egress complex (NEC) localization (PubMed:25339763).</text>
</comment>
<comment type="similarity">
    <text evidence="1">Belongs to the herpesviridae NEC1 protein family.</text>
</comment>
<keyword id="KW-0002">3D-structure</keyword>
<keyword id="KW-1043">Host membrane</keyword>
<keyword id="KW-1048">Host nucleus</keyword>
<keyword id="KW-0472">Membrane</keyword>
<keyword id="KW-0479">Metal-binding</keyword>
<keyword id="KW-0597">Phosphoprotein</keyword>
<keyword id="KW-1185">Reference proteome</keyword>
<keyword id="KW-0862">Zinc</keyword>
<keyword id="KW-0863">Zinc-finger</keyword>
<protein>
    <recommendedName>
        <fullName evidence="1">Nuclear egress protein 1</fullName>
    </recommendedName>
</protein>
<organism>
    <name type="scientific">Human cytomegalovirus (strain AD169)</name>
    <name type="common">HHV-5</name>
    <name type="synonym">Human herpesvirus 5</name>
    <dbReference type="NCBI Taxonomy" id="10360"/>
    <lineage>
        <taxon>Viruses</taxon>
        <taxon>Duplodnaviria</taxon>
        <taxon>Heunggongvirae</taxon>
        <taxon>Peploviricota</taxon>
        <taxon>Herviviricetes</taxon>
        <taxon>Herpesvirales</taxon>
        <taxon>Orthoherpesviridae</taxon>
        <taxon>Betaherpesvirinae</taxon>
        <taxon>Cytomegalovirus</taxon>
        <taxon>Cytomegalovirus humanbeta5</taxon>
        <taxon>Human cytomegalovirus</taxon>
    </lineage>
</organism>
<gene>
    <name evidence="1" type="primary">NEC1</name>
    <name type="ordered locus">UL53</name>
</gene>
<reference key="1">
    <citation type="journal article" date="1987" name="Virology">
        <title>Large-scale rearrangement of homologous regions in the genomes of HCMV and EBV.</title>
        <authorList>
            <person name="Kouzarides T."/>
            <person name="Bankier A.T."/>
            <person name="Satchwell S.C."/>
            <person name="Weston K.M."/>
            <person name="Tomlinson P."/>
            <person name="Barrell B.G."/>
        </authorList>
    </citation>
    <scope>NUCLEOTIDE SEQUENCE [GENOMIC DNA]</scope>
</reference>
<reference key="2">
    <citation type="journal article" date="1990" name="Curr. Top. Microbiol. Immunol.">
        <title>Analysis of the protein-coding content of the sequence of human cytomegalovirus strain AD169.</title>
        <authorList>
            <person name="Chee M.S."/>
            <person name="Bankier A.T."/>
            <person name="Beck S."/>
            <person name="Bohni R."/>
            <person name="Brown C.M."/>
            <person name="Cerny R."/>
            <person name="Horsnell T."/>
            <person name="Hutchison C.A. III"/>
            <person name="Kouzarides T."/>
            <person name="Martignetti J.A."/>
            <person name="Preddie E."/>
            <person name="Satchwell S.C."/>
            <person name="Tomlinson P."/>
            <person name="Weston K.M."/>
            <person name="Barrell B.G."/>
        </authorList>
    </citation>
    <scope>NUCLEOTIDE SEQUENCE [LARGE SCALE GENOMIC DNA]</scope>
</reference>
<reference key="3">
    <citation type="journal article" date="2003" name="J. Gen. Virol.">
        <title>The human cytomegalovirus genome revisited: comparison with the chimpanzee cytomegalovirus genome.</title>
        <authorList>
            <person name="Davison A.J."/>
            <person name="Dolan A."/>
            <person name="Akter P."/>
            <person name="Addison C."/>
            <person name="Dargan D.J."/>
            <person name="Alcendor D.J."/>
            <person name="McGeoch D.J."/>
            <person name="Hayward G.S."/>
        </authorList>
    </citation>
    <scope>GENOME REANNOTATION</scope>
</reference>
<reference key="4">
    <citation type="journal article" date="2003" name="J. Gen. Virol.">
        <authorList>
            <person name="Davison A.J."/>
            <person name="Dolan A."/>
            <person name="Akter P."/>
            <person name="Addison C."/>
            <person name="Dargan D.J."/>
            <person name="Alcendor D.J."/>
            <person name="McGeoch D.J."/>
            <person name="Hayward G.S."/>
        </authorList>
    </citation>
    <scope>ERRATUM OF PUBMED:12533697</scope>
</reference>
<reference key="5">
    <citation type="journal article" date="2002" name="J. Gen. Virol.">
        <title>Analysis of intracellular and intraviral localization of the human cytomegalovirus UL53 protein.</title>
        <authorList>
            <person name="Dal Monte P."/>
            <person name="Pignatelli S."/>
            <person name="Zini N."/>
            <person name="Maraldi N.M."/>
            <person name="Perret E."/>
            <person name="Prevost M.C."/>
            <person name="Landini M.P."/>
        </authorList>
    </citation>
    <scope>SUBCELLULAR LOCATION</scope>
</reference>
<reference key="6">
    <citation type="journal article" date="2006" name="J. Virol.">
        <title>Common and specific properties of herpesvirus UL34/UL31 protein family members revealed by protein complementation assay.</title>
        <authorList>
            <person name="Schnee M."/>
            <person name="Ruzsics Z."/>
            <person name="Bubeck A."/>
            <person name="Koszinowski U.H."/>
        </authorList>
    </citation>
    <scope>INTERACTION WITH UL50</scope>
</reference>
<reference key="7">
    <citation type="journal article" date="2015" name="J. Virol.">
        <title>Human cytomegalovirus UL97 phosphorylates the viral nuclear egress complex.</title>
        <authorList>
            <person name="Sharma M."/>
            <person name="Bender B.J."/>
            <person name="Kamil J.P."/>
            <person name="Lye M.F."/>
            <person name="Pesola J.M."/>
            <person name="Reim N.I."/>
            <person name="Hogle J.M."/>
            <person name="Coen D.M."/>
        </authorList>
    </citation>
    <scope>FUNCTION</scope>
    <scope>PHOSPHORYLATION AT SER-19</scope>
    <scope>SUBCELLULAR LOCATION</scope>
    <scope>MUTAGENESIS OF SER-19</scope>
</reference>
<reference key="8">
    <citation type="journal article" date="2015" name="EMBO J.">
        <title>Unexpected features and mechanism of heterodimer formation of a herpesvirus nuclear egress complex.</title>
        <authorList>
            <person name="Lye M.F."/>
            <person name="Sharma M."/>
            <person name="El Omari K."/>
            <person name="Filman D.J."/>
            <person name="Schuermann J.P."/>
            <person name="Hogle J.M."/>
            <person name="Coen D.M."/>
        </authorList>
    </citation>
    <scope>X-RAY CRYSTALLOGRAPHY (2.47 ANGSTROMS) OF 4-168</scope>
    <scope>INTERACTION WITH NEC2</scope>
    <scope>SUBCELLULAR LOCATION</scope>
    <scope>MUTAGENESIS OF LEU-79; CYS-122; CYS-125 AND HIS-211</scope>
</reference>
<reference evidence="7" key="9">
    <citation type="journal article" date="2020" name="J. Biol. Chem.">
        <title>High-resolution crystal structures of two prototypical beta- and gamma-herpesviral nuclear egress complexes unravel the determinants of subfamily specificity.</title>
        <authorList>
            <person name="Muller Y.A."/>
            <person name="Hage S."/>
            <person name="Alkhashrom S."/>
            <person name="Hollriegl T."/>
            <person name="Weigert S."/>
            <person name="Dolles S."/>
            <person name="Hof K."/>
            <person name="Walzer S.A."/>
            <person name="Egerer-Sieber C."/>
            <person name="Conrad M."/>
            <person name="Holst S."/>
            <person name="Losing J."/>
            <person name="Sonntag E."/>
            <person name="Sticht H."/>
            <person name="Eichler J."/>
            <person name="Marschall M."/>
        </authorList>
    </citation>
    <scope>X-RAY CRYSTALLOGRAPHY (1.48 ANGSTROMS) OF 1-171</scope>
    <scope>INTERACTION WITH NEC2</scope>
    <scope>SUBCELLULAR LOCATION</scope>
</reference>
<name>NEC1_HCMVA</name>